<keyword id="KW-0249">Electron transport</keyword>
<keyword id="KW-0349">Heme</keyword>
<keyword id="KW-0408">Iron</keyword>
<keyword id="KW-0472">Membrane</keyword>
<keyword id="KW-0479">Metal-binding</keyword>
<keyword id="KW-0496">Mitochondrion</keyword>
<keyword id="KW-0999">Mitochondrion inner membrane</keyword>
<keyword id="KW-0679">Respiratory chain</keyword>
<keyword id="KW-0812">Transmembrane</keyword>
<keyword id="KW-1133">Transmembrane helix</keyword>
<keyword id="KW-0813">Transport</keyword>
<keyword id="KW-0830">Ubiquinone</keyword>
<proteinExistence type="inferred from homology"/>
<organism>
    <name type="scientific">Capreolus capreolus</name>
    <name type="common">European roe deer</name>
    <name type="synonym">Cervus capreolus</name>
    <dbReference type="NCBI Taxonomy" id="9858"/>
    <lineage>
        <taxon>Eukaryota</taxon>
        <taxon>Metazoa</taxon>
        <taxon>Chordata</taxon>
        <taxon>Craniata</taxon>
        <taxon>Vertebrata</taxon>
        <taxon>Euteleostomi</taxon>
        <taxon>Mammalia</taxon>
        <taxon>Eutheria</taxon>
        <taxon>Laurasiatheria</taxon>
        <taxon>Artiodactyla</taxon>
        <taxon>Ruminantia</taxon>
        <taxon>Pecora</taxon>
        <taxon>Cervidae</taxon>
        <taxon>Odocoileinae</taxon>
        <taxon>Capreolus</taxon>
    </lineage>
</organism>
<reference key="1">
    <citation type="journal article" date="1998" name="Proc. R. Soc. B">
        <title>New phylogenetic perspectives on the Cervidae (Artiodactyla) are provided by the mitochondrial cytochrome b gene.</title>
        <authorList>
            <person name="Randi E."/>
            <person name="Mucci N."/>
            <person name="Pierpaoli M."/>
            <person name="Douzery E.J.P."/>
        </authorList>
    </citation>
    <scope>NUCLEOTIDE SEQUENCE [GENOMIC DNA]</scope>
</reference>
<evidence type="ECO:0000250" key="1"/>
<evidence type="ECO:0000250" key="2">
    <source>
        <dbReference type="UniProtKB" id="P00157"/>
    </source>
</evidence>
<evidence type="ECO:0000255" key="3">
    <source>
        <dbReference type="PROSITE-ProRule" id="PRU00967"/>
    </source>
</evidence>
<evidence type="ECO:0000255" key="4">
    <source>
        <dbReference type="PROSITE-ProRule" id="PRU00968"/>
    </source>
</evidence>
<sequence>MTNIRKTHPLMKIVNNAFIDLPAPSNISSWWNFGSLLGICLILQILTGLFLAMHYTSDTMTAFSSVTHICRDVNYGWIIRYMHANGASMFFICLFLHVGRGLYYGSYTFLETWNIGVILLFTVMATAFVGYVLPWGQMSFWGATVITNLLSAIPYIGTNLVEWIWGGFSVDKATLTRFFAFHFILPFIIAALAMVHLLFLHETGSNNPMGIPSNADKIPFHPYYTIKDILGVLFLILSLMLLVLFAPDLLGDPDNYTPANPLNTPPHIKPEWYFLFAYAILRSIPNKLGGVLALISSILILILMPLLHTSKQRSMMFRPFSQCLFWILVADLLTLTWIGGQPVEYPFIAIGQIASIMYFLIILVLMPITSTIENNLLKW</sequence>
<accession>O47923</accession>
<comment type="function">
    <text evidence="2">Component of the ubiquinol-cytochrome c reductase complex (complex III or cytochrome b-c1 complex) that is part of the mitochondrial respiratory chain. The b-c1 complex mediates electron transfer from ubiquinol to cytochrome c. Contributes to the generation of a proton gradient across the mitochondrial membrane that is then used for ATP synthesis.</text>
</comment>
<comment type="cofactor">
    <cofactor evidence="2">
        <name>heme b</name>
        <dbReference type="ChEBI" id="CHEBI:60344"/>
    </cofactor>
    <text evidence="2">Binds 2 heme b groups non-covalently.</text>
</comment>
<comment type="subunit">
    <text evidence="2">The cytochrome bc1 complex contains 11 subunits: 3 respiratory subunits (MT-CYB, CYC1 and UQCRFS1), 2 core proteins (UQCRC1 and UQCRC2) and 6 low-molecular weight proteins (UQCRH/QCR6, UQCRB/QCR7, UQCRQ/QCR8, UQCR10/QCR9, UQCR11/QCR10 and a cleavage product of UQCRFS1). This cytochrome bc1 complex then forms a dimer.</text>
</comment>
<comment type="subcellular location">
    <subcellularLocation>
        <location evidence="2">Mitochondrion inner membrane</location>
        <topology evidence="2">Multi-pass membrane protein</topology>
    </subcellularLocation>
</comment>
<comment type="miscellaneous">
    <text evidence="1">Heme 1 (or BL or b562) is low-potential and absorbs at about 562 nm, and heme 2 (or BH or b566) is high-potential and absorbs at about 566 nm.</text>
</comment>
<comment type="similarity">
    <text evidence="3 4">Belongs to the cytochrome b family.</text>
</comment>
<comment type="caution">
    <text evidence="2">The full-length protein contains only eight transmembrane helices, not nine as predicted by bioinformatics tools.</text>
</comment>
<geneLocation type="mitochondrion"/>
<feature type="chain" id="PRO_0000060720" description="Cytochrome b">
    <location>
        <begin position="1"/>
        <end position="379"/>
    </location>
</feature>
<feature type="transmembrane region" description="Helical" evidence="2">
    <location>
        <begin position="33"/>
        <end position="53"/>
    </location>
</feature>
<feature type="transmembrane region" description="Helical" evidence="2">
    <location>
        <begin position="77"/>
        <end position="98"/>
    </location>
</feature>
<feature type="transmembrane region" description="Helical" evidence="2">
    <location>
        <begin position="113"/>
        <end position="133"/>
    </location>
</feature>
<feature type="transmembrane region" description="Helical" evidence="2">
    <location>
        <begin position="178"/>
        <end position="198"/>
    </location>
</feature>
<feature type="transmembrane region" description="Helical" evidence="2">
    <location>
        <begin position="226"/>
        <end position="246"/>
    </location>
</feature>
<feature type="transmembrane region" description="Helical" evidence="2">
    <location>
        <begin position="288"/>
        <end position="308"/>
    </location>
</feature>
<feature type="transmembrane region" description="Helical" evidence="2">
    <location>
        <begin position="320"/>
        <end position="340"/>
    </location>
</feature>
<feature type="transmembrane region" description="Helical" evidence="2">
    <location>
        <begin position="347"/>
        <end position="367"/>
    </location>
</feature>
<feature type="binding site" description="axial binding residue" evidence="2">
    <location>
        <position position="83"/>
    </location>
    <ligand>
        <name>heme b</name>
        <dbReference type="ChEBI" id="CHEBI:60344"/>
        <label>b562</label>
    </ligand>
    <ligandPart>
        <name>Fe</name>
        <dbReference type="ChEBI" id="CHEBI:18248"/>
    </ligandPart>
</feature>
<feature type="binding site" description="axial binding residue" evidence="2">
    <location>
        <position position="97"/>
    </location>
    <ligand>
        <name>heme b</name>
        <dbReference type="ChEBI" id="CHEBI:60344"/>
        <label>b566</label>
    </ligand>
    <ligandPart>
        <name>Fe</name>
        <dbReference type="ChEBI" id="CHEBI:18248"/>
    </ligandPart>
</feature>
<feature type="binding site" description="axial binding residue" evidence="2">
    <location>
        <position position="182"/>
    </location>
    <ligand>
        <name>heme b</name>
        <dbReference type="ChEBI" id="CHEBI:60344"/>
        <label>b562</label>
    </ligand>
    <ligandPart>
        <name>Fe</name>
        <dbReference type="ChEBI" id="CHEBI:18248"/>
    </ligandPart>
</feature>
<feature type="binding site" description="axial binding residue" evidence="2">
    <location>
        <position position="196"/>
    </location>
    <ligand>
        <name>heme b</name>
        <dbReference type="ChEBI" id="CHEBI:60344"/>
        <label>b566</label>
    </ligand>
    <ligandPart>
        <name>Fe</name>
        <dbReference type="ChEBI" id="CHEBI:18248"/>
    </ligandPart>
</feature>
<feature type="binding site" evidence="2">
    <location>
        <position position="201"/>
    </location>
    <ligand>
        <name>a ubiquinone</name>
        <dbReference type="ChEBI" id="CHEBI:16389"/>
    </ligand>
</feature>
<protein>
    <recommendedName>
        <fullName>Cytochrome b</fullName>
    </recommendedName>
    <alternativeName>
        <fullName>Complex III subunit 3</fullName>
    </alternativeName>
    <alternativeName>
        <fullName>Complex III subunit III</fullName>
    </alternativeName>
    <alternativeName>
        <fullName>Cytochrome b-c1 complex subunit 3</fullName>
    </alternativeName>
    <alternativeName>
        <fullName>Ubiquinol-cytochrome-c reductase complex cytochrome b subunit</fullName>
    </alternativeName>
</protein>
<gene>
    <name type="primary">MT-CYB</name>
    <name type="synonym">COB</name>
    <name type="synonym">CYTB</name>
    <name type="synonym">MTCYB</name>
</gene>
<name>CYB_CAPCA</name>
<dbReference type="EMBL" id="AJ000024">
    <property type="protein sequence ID" value="CAA03863.1"/>
    <property type="molecule type" value="Genomic_DNA"/>
</dbReference>
<dbReference type="SMR" id="O47923"/>
<dbReference type="GO" id="GO:0005743">
    <property type="term" value="C:mitochondrial inner membrane"/>
    <property type="evidence" value="ECO:0007669"/>
    <property type="project" value="UniProtKB-SubCell"/>
</dbReference>
<dbReference type="GO" id="GO:0045275">
    <property type="term" value="C:respiratory chain complex III"/>
    <property type="evidence" value="ECO:0007669"/>
    <property type="project" value="InterPro"/>
</dbReference>
<dbReference type="GO" id="GO:0046872">
    <property type="term" value="F:metal ion binding"/>
    <property type="evidence" value="ECO:0007669"/>
    <property type="project" value="UniProtKB-KW"/>
</dbReference>
<dbReference type="GO" id="GO:0008121">
    <property type="term" value="F:ubiquinol-cytochrome-c reductase activity"/>
    <property type="evidence" value="ECO:0007669"/>
    <property type="project" value="InterPro"/>
</dbReference>
<dbReference type="GO" id="GO:0006122">
    <property type="term" value="P:mitochondrial electron transport, ubiquinol to cytochrome c"/>
    <property type="evidence" value="ECO:0007669"/>
    <property type="project" value="TreeGrafter"/>
</dbReference>
<dbReference type="CDD" id="cd00290">
    <property type="entry name" value="cytochrome_b_C"/>
    <property type="match status" value="1"/>
</dbReference>
<dbReference type="CDD" id="cd00284">
    <property type="entry name" value="Cytochrome_b_N"/>
    <property type="match status" value="1"/>
</dbReference>
<dbReference type="FunFam" id="1.20.810.10:FF:000002">
    <property type="entry name" value="Cytochrome b"/>
    <property type="match status" value="1"/>
</dbReference>
<dbReference type="Gene3D" id="1.20.810.10">
    <property type="entry name" value="Cytochrome Bc1 Complex, Chain C"/>
    <property type="match status" value="1"/>
</dbReference>
<dbReference type="InterPro" id="IPR005798">
    <property type="entry name" value="Cyt_b/b6_C"/>
</dbReference>
<dbReference type="InterPro" id="IPR036150">
    <property type="entry name" value="Cyt_b/b6_C_sf"/>
</dbReference>
<dbReference type="InterPro" id="IPR005797">
    <property type="entry name" value="Cyt_b/b6_N"/>
</dbReference>
<dbReference type="InterPro" id="IPR027387">
    <property type="entry name" value="Cytb/b6-like_sf"/>
</dbReference>
<dbReference type="InterPro" id="IPR030689">
    <property type="entry name" value="Cytochrome_b"/>
</dbReference>
<dbReference type="InterPro" id="IPR048260">
    <property type="entry name" value="Cytochrome_b_C_euk/bac"/>
</dbReference>
<dbReference type="InterPro" id="IPR048259">
    <property type="entry name" value="Cytochrome_b_N_euk/bac"/>
</dbReference>
<dbReference type="InterPro" id="IPR016174">
    <property type="entry name" value="Di-haem_cyt_TM"/>
</dbReference>
<dbReference type="PANTHER" id="PTHR19271">
    <property type="entry name" value="CYTOCHROME B"/>
    <property type="match status" value="1"/>
</dbReference>
<dbReference type="PANTHER" id="PTHR19271:SF16">
    <property type="entry name" value="CYTOCHROME B"/>
    <property type="match status" value="1"/>
</dbReference>
<dbReference type="Pfam" id="PF00032">
    <property type="entry name" value="Cytochrom_B_C"/>
    <property type="match status" value="1"/>
</dbReference>
<dbReference type="Pfam" id="PF00033">
    <property type="entry name" value="Cytochrome_B"/>
    <property type="match status" value="1"/>
</dbReference>
<dbReference type="PIRSF" id="PIRSF038885">
    <property type="entry name" value="COB"/>
    <property type="match status" value="1"/>
</dbReference>
<dbReference type="SUPFAM" id="SSF81648">
    <property type="entry name" value="a domain/subunit of cytochrome bc1 complex (Ubiquinol-cytochrome c reductase)"/>
    <property type="match status" value="1"/>
</dbReference>
<dbReference type="SUPFAM" id="SSF81342">
    <property type="entry name" value="Transmembrane di-heme cytochromes"/>
    <property type="match status" value="1"/>
</dbReference>
<dbReference type="PROSITE" id="PS51003">
    <property type="entry name" value="CYTB_CTER"/>
    <property type="match status" value="1"/>
</dbReference>
<dbReference type="PROSITE" id="PS51002">
    <property type="entry name" value="CYTB_NTER"/>
    <property type="match status" value="1"/>
</dbReference>